<organism>
    <name type="scientific">Listeria welshimeri serovar 6b (strain ATCC 35897 / DSM 20650 / CCUG 15529 / CIP 8149 / NCTC 11857 / SLCC 5334 / V8)</name>
    <dbReference type="NCBI Taxonomy" id="386043"/>
    <lineage>
        <taxon>Bacteria</taxon>
        <taxon>Bacillati</taxon>
        <taxon>Bacillota</taxon>
        <taxon>Bacilli</taxon>
        <taxon>Bacillales</taxon>
        <taxon>Listeriaceae</taxon>
        <taxon>Listeria</taxon>
    </lineage>
</organism>
<evidence type="ECO:0000255" key="1">
    <source>
        <dbReference type="HAMAP-Rule" id="MF_00172"/>
    </source>
</evidence>
<reference key="1">
    <citation type="journal article" date="2006" name="J. Bacteriol.">
        <title>Whole-genome sequence of Listeria welshimeri reveals common steps in genome reduction with Listeria innocua as compared to Listeria monocytogenes.</title>
        <authorList>
            <person name="Hain T."/>
            <person name="Steinweg C."/>
            <person name="Kuenne C.T."/>
            <person name="Billion A."/>
            <person name="Ghai R."/>
            <person name="Chatterjee S.S."/>
            <person name="Domann E."/>
            <person name="Kaerst U."/>
            <person name="Goesmann A."/>
            <person name="Bekel T."/>
            <person name="Bartels D."/>
            <person name="Kaiser O."/>
            <person name="Meyer F."/>
            <person name="Puehler A."/>
            <person name="Weisshaar B."/>
            <person name="Wehland J."/>
            <person name="Liang C."/>
            <person name="Dandekar T."/>
            <person name="Lampidis R."/>
            <person name="Kreft J."/>
            <person name="Goebel W."/>
            <person name="Chakraborty T."/>
        </authorList>
    </citation>
    <scope>NUCLEOTIDE SEQUENCE [LARGE SCALE GENOMIC DNA]</scope>
    <source>
        <strain>ATCC 35897 / DSM 20650 / CCUG 15529 / CIP 8149 / NCTC 11857 / SLCC 5334 / V8</strain>
    </source>
</reference>
<sequence length="765" mass="86661">MVKAISSNLGYPRLGEKREWKRALEKFWNGTITEEELLAETKALRLHALKKQQEKGIDLIPVGDFSFYDQVLDTSVTFGIIPKRFQHEGGNVSLNTYFDIARGKNDAVASEMTKWFNTNYHYIVPELADANPKLLNNRALYYYEEAKKELGIEGKPVLVGPITYLKLGKGSNAESFEVLLDKFIPAYIEILEELETAGVEWVQIDEPYLATSFEKKEIALFEKVYQSFQEAVPNLKIELQTYFESLDYYEEVVNLPVAAIGIDFVHDHGDSLQALKTYGFPQDKYLAAGVIDGRNVWRSNLDAKLALLTDIAHYVAKDKLIVQPSNSLLHVPVTKLSEPDLDEVILGGLSFADQKLDEIVILTKALTEGVESVAKELEEARKAVKVLNESSHRNNLEVQAAIANLKNVRVDRELVFAERIKLQHAWLNLPLFPTTTIGSFPQSPEVRKTRADWLKGNITDAEYNAFIEKETARWIKIQEELDIDVLVHGEFERTDMVEYFGQKLAGFQATKFGWVQSYGSRAVRPPLIYGDVAFTEEITVKESVYAQSLTKRPVKGMLTAPVTIINWSFVRDDVPESVVANQVGLALRKEVEALERNGIKVIQVDEPALREGLPLKQARWEKYLNDAVYSFKLTTASVQNDTQIHTHMCYSDFDDIIDTISALDADVISIETSRSHGEIISTFEEVTYDKEIGLGVYDIHSPRVPTVTEIQDNIRRALRAIDAKQFWINPDCGLKTRQEPETIAALQDMIKATKEVRAEYQVLEK</sequence>
<comment type="function">
    <text evidence="1">Catalyzes the transfer of a methyl group from 5-methyltetrahydrofolate to homocysteine resulting in methionine formation.</text>
</comment>
<comment type="catalytic activity">
    <reaction evidence="1">
        <text>5-methyltetrahydropteroyltri-L-glutamate + L-homocysteine = tetrahydropteroyltri-L-glutamate + L-methionine</text>
        <dbReference type="Rhea" id="RHEA:21196"/>
        <dbReference type="ChEBI" id="CHEBI:57844"/>
        <dbReference type="ChEBI" id="CHEBI:58140"/>
        <dbReference type="ChEBI" id="CHEBI:58199"/>
        <dbReference type="ChEBI" id="CHEBI:58207"/>
        <dbReference type="EC" id="2.1.1.14"/>
    </reaction>
</comment>
<comment type="cofactor">
    <cofactor evidence="1">
        <name>Zn(2+)</name>
        <dbReference type="ChEBI" id="CHEBI:29105"/>
    </cofactor>
    <text evidence="1">Binds 1 zinc ion per subunit.</text>
</comment>
<comment type="pathway">
    <text evidence="1">Amino-acid biosynthesis; L-methionine biosynthesis via de novo pathway; L-methionine from L-homocysteine (MetE route): step 1/1.</text>
</comment>
<comment type="similarity">
    <text evidence="1">Belongs to the vitamin-B12 independent methionine synthase family.</text>
</comment>
<feature type="chain" id="PRO_1000017252" description="5-methyltetrahydropteroyltriglutamate--homocysteine methyltransferase">
    <location>
        <begin position="1"/>
        <end position="765"/>
    </location>
</feature>
<feature type="active site" description="Proton donor" evidence="1">
    <location>
        <position position="700"/>
    </location>
</feature>
<feature type="binding site" evidence="1">
    <location>
        <begin position="18"/>
        <end position="21"/>
    </location>
    <ligand>
        <name>5-methyltetrahydropteroyltri-L-glutamate</name>
        <dbReference type="ChEBI" id="CHEBI:58207"/>
    </ligand>
</feature>
<feature type="binding site" evidence="1">
    <location>
        <position position="114"/>
    </location>
    <ligand>
        <name>5-methyltetrahydropteroyltri-L-glutamate</name>
        <dbReference type="ChEBI" id="CHEBI:58207"/>
    </ligand>
</feature>
<feature type="binding site" evidence="1">
    <location>
        <begin position="437"/>
        <end position="439"/>
    </location>
    <ligand>
        <name>L-homocysteine</name>
        <dbReference type="ChEBI" id="CHEBI:58199"/>
    </ligand>
</feature>
<feature type="binding site" evidence="1">
    <location>
        <begin position="437"/>
        <end position="439"/>
    </location>
    <ligand>
        <name>L-methionine</name>
        <dbReference type="ChEBI" id="CHEBI:57844"/>
    </ligand>
</feature>
<feature type="binding site" evidence="1">
    <location>
        <position position="490"/>
    </location>
    <ligand>
        <name>L-homocysteine</name>
        <dbReference type="ChEBI" id="CHEBI:58199"/>
    </ligand>
</feature>
<feature type="binding site" evidence="1">
    <location>
        <position position="490"/>
    </location>
    <ligand>
        <name>L-methionine</name>
        <dbReference type="ChEBI" id="CHEBI:57844"/>
    </ligand>
</feature>
<feature type="binding site" evidence="1">
    <location>
        <position position="567"/>
    </location>
    <ligand>
        <name>5-methyltetrahydropteroyltri-L-glutamate</name>
        <dbReference type="ChEBI" id="CHEBI:58207"/>
    </ligand>
</feature>
<feature type="binding site" evidence="1">
    <location>
        <position position="605"/>
    </location>
    <ligand>
        <name>L-homocysteine</name>
        <dbReference type="ChEBI" id="CHEBI:58199"/>
    </ligand>
</feature>
<feature type="binding site" evidence="1">
    <location>
        <position position="605"/>
    </location>
    <ligand>
        <name>L-methionine</name>
        <dbReference type="ChEBI" id="CHEBI:57844"/>
    </ligand>
</feature>
<feature type="binding site" evidence="1">
    <location>
        <position position="611"/>
    </location>
    <ligand>
        <name>5-methyltetrahydropteroyltri-L-glutamate</name>
        <dbReference type="ChEBI" id="CHEBI:58207"/>
    </ligand>
</feature>
<feature type="binding site" evidence="1">
    <location>
        <position position="647"/>
    </location>
    <ligand>
        <name>Zn(2+)</name>
        <dbReference type="ChEBI" id="CHEBI:29105"/>
        <note>catalytic</note>
    </ligand>
</feature>
<feature type="binding site" evidence="1">
    <location>
        <position position="649"/>
    </location>
    <ligand>
        <name>Zn(2+)</name>
        <dbReference type="ChEBI" id="CHEBI:29105"/>
        <note>catalytic</note>
    </ligand>
</feature>
<feature type="binding site" evidence="1">
    <location>
        <position position="671"/>
    </location>
    <ligand>
        <name>Zn(2+)</name>
        <dbReference type="ChEBI" id="CHEBI:29105"/>
        <note>catalytic</note>
    </ligand>
</feature>
<feature type="binding site" evidence="1">
    <location>
        <position position="732"/>
    </location>
    <ligand>
        <name>Zn(2+)</name>
        <dbReference type="ChEBI" id="CHEBI:29105"/>
        <note>catalytic</note>
    </ligand>
</feature>
<name>METE_LISW6</name>
<keyword id="KW-0028">Amino-acid biosynthesis</keyword>
<keyword id="KW-0479">Metal-binding</keyword>
<keyword id="KW-0486">Methionine biosynthesis</keyword>
<keyword id="KW-0489">Methyltransferase</keyword>
<keyword id="KW-0677">Repeat</keyword>
<keyword id="KW-0808">Transferase</keyword>
<keyword id="KW-0862">Zinc</keyword>
<accession>A0AJD5</accession>
<gene>
    <name evidence="1" type="primary">metE</name>
    <name type="ordered locus">lwe1699</name>
</gene>
<proteinExistence type="inferred from homology"/>
<dbReference type="EC" id="2.1.1.14" evidence="1"/>
<dbReference type="EMBL" id="AM263198">
    <property type="protein sequence ID" value="CAK21117.1"/>
    <property type="molecule type" value="Genomic_DNA"/>
</dbReference>
<dbReference type="RefSeq" id="WP_011702481.1">
    <property type="nucleotide sequence ID" value="NC_008555.1"/>
</dbReference>
<dbReference type="SMR" id="A0AJD5"/>
<dbReference type="STRING" id="386043.lwe1699"/>
<dbReference type="GeneID" id="61189575"/>
<dbReference type="KEGG" id="lwe:lwe1699"/>
<dbReference type="eggNOG" id="COG0620">
    <property type="taxonomic scope" value="Bacteria"/>
</dbReference>
<dbReference type="HOGENOM" id="CLU_013175_0_0_9"/>
<dbReference type="OrthoDB" id="244285at2"/>
<dbReference type="UniPathway" id="UPA00051">
    <property type="reaction ID" value="UER00082"/>
</dbReference>
<dbReference type="Proteomes" id="UP000000779">
    <property type="component" value="Chromosome"/>
</dbReference>
<dbReference type="GO" id="GO:0003871">
    <property type="term" value="F:5-methyltetrahydropteroyltriglutamate-homocysteine S-methyltransferase activity"/>
    <property type="evidence" value="ECO:0007669"/>
    <property type="project" value="UniProtKB-UniRule"/>
</dbReference>
<dbReference type="GO" id="GO:0008270">
    <property type="term" value="F:zinc ion binding"/>
    <property type="evidence" value="ECO:0007669"/>
    <property type="project" value="InterPro"/>
</dbReference>
<dbReference type="GO" id="GO:0009086">
    <property type="term" value="P:methionine biosynthetic process"/>
    <property type="evidence" value="ECO:0007669"/>
    <property type="project" value="UniProtKB-UniRule"/>
</dbReference>
<dbReference type="GO" id="GO:0032259">
    <property type="term" value="P:methylation"/>
    <property type="evidence" value="ECO:0007669"/>
    <property type="project" value="UniProtKB-KW"/>
</dbReference>
<dbReference type="CDD" id="cd03311">
    <property type="entry name" value="CIMS_C_terminal_like"/>
    <property type="match status" value="1"/>
</dbReference>
<dbReference type="CDD" id="cd03312">
    <property type="entry name" value="CIMS_N_terminal_like"/>
    <property type="match status" value="1"/>
</dbReference>
<dbReference type="Gene3D" id="3.20.20.210">
    <property type="match status" value="2"/>
</dbReference>
<dbReference type="HAMAP" id="MF_00172">
    <property type="entry name" value="Meth_synth"/>
    <property type="match status" value="1"/>
</dbReference>
<dbReference type="InterPro" id="IPR013215">
    <property type="entry name" value="Cbl-indep_Met_Synth_N"/>
</dbReference>
<dbReference type="InterPro" id="IPR006276">
    <property type="entry name" value="Cobalamin-indep_Met_synthase"/>
</dbReference>
<dbReference type="InterPro" id="IPR002629">
    <property type="entry name" value="Met_Synth_C/arc"/>
</dbReference>
<dbReference type="InterPro" id="IPR038071">
    <property type="entry name" value="UROD/MetE-like_sf"/>
</dbReference>
<dbReference type="NCBIfam" id="TIGR01371">
    <property type="entry name" value="met_syn_B12ind"/>
    <property type="match status" value="1"/>
</dbReference>
<dbReference type="NCBIfam" id="NF003556">
    <property type="entry name" value="PRK05222.1"/>
    <property type="match status" value="1"/>
</dbReference>
<dbReference type="PANTHER" id="PTHR30519">
    <property type="entry name" value="5-METHYLTETRAHYDROPTEROYLTRIGLUTAMATE--HOMOCYSTEINE METHYLTRANSFERASE"/>
    <property type="match status" value="1"/>
</dbReference>
<dbReference type="Pfam" id="PF08267">
    <property type="entry name" value="Meth_synt_1"/>
    <property type="match status" value="1"/>
</dbReference>
<dbReference type="Pfam" id="PF01717">
    <property type="entry name" value="Meth_synt_2"/>
    <property type="match status" value="1"/>
</dbReference>
<dbReference type="PIRSF" id="PIRSF000382">
    <property type="entry name" value="MeTrfase_B12_ind"/>
    <property type="match status" value="1"/>
</dbReference>
<dbReference type="SUPFAM" id="SSF51726">
    <property type="entry name" value="UROD/MetE-like"/>
    <property type="match status" value="2"/>
</dbReference>
<protein>
    <recommendedName>
        <fullName evidence="1">5-methyltetrahydropteroyltriglutamate--homocysteine methyltransferase</fullName>
        <ecNumber evidence="1">2.1.1.14</ecNumber>
    </recommendedName>
    <alternativeName>
        <fullName evidence="1">Cobalamin-independent methionine synthase</fullName>
    </alternativeName>
    <alternativeName>
        <fullName evidence="1">Methionine synthase, vitamin-B12 independent isozyme</fullName>
    </alternativeName>
</protein>